<organism>
    <name type="scientific">Xanthomonas axonopodis pv. citri (strain 306)</name>
    <dbReference type="NCBI Taxonomy" id="190486"/>
    <lineage>
        <taxon>Bacteria</taxon>
        <taxon>Pseudomonadati</taxon>
        <taxon>Pseudomonadota</taxon>
        <taxon>Gammaproteobacteria</taxon>
        <taxon>Lysobacterales</taxon>
        <taxon>Lysobacteraceae</taxon>
        <taxon>Xanthomonas</taxon>
    </lineage>
</organism>
<keyword id="KW-0520">NAD</keyword>
<keyword id="KW-0560">Oxidoreductase</keyword>
<keyword id="KW-0816">Tricarboxylic acid cycle</keyword>
<accession>Q8PNP8</accession>
<gene>
    <name evidence="1" type="primary">mdh</name>
    <name type="ordered locus">XAC1006</name>
</gene>
<protein>
    <recommendedName>
        <fullName evidence="1">Malate dehydrogenase</fullName>
        <ecNumber evidence="1">1.1.1.37</ecNumber>
    </recommendedName>
</protein>
<name>MDH_XANAC</name>
<comment type="function">
    <text evidence="1">Catalyzes the reversible oxidation of malate to oxaloacetate.</text>
</comment>
<comment type="catalytic activity">
    <reaction evidence="1">
        <text>(S)-malate + NAD(+) = oxaloacetate + NADH + H(+)</text>
        <dbReference type="Rhea" id="RHEA:21432"/>
        <dbReference type="ChEBI" id="CHEBI:15378"/>
        <dbReference type="ChEBI" id="CHEBI:15589"/>
        <dbReference type="ChEBI" id="CHEBI:16452"/>
        <dbReference type="ChEBI" id="CHEBI:57540"/>
        <dbReference type="ChEBI" id="CHEBI:57945"/>
        <dbReference type="EC" id="1.1.1.37"/>
    </reaction>
</comment>
<comment type="similarity">
    <text evidence="1">Belongs to the LDH/MDH superfamily. MDH type 2 family.</text>
</comment>
<sequence>MKAPVRVAVTGAAGQIGYALLFRIASGEMLGKDQPVILQLLELPIEKAQAALKGVMMELEDCAFPLLAGMVGTDDAEVAFKDVDVALLVGSRPRGPGMERKDLLLANAEIFTAQGAALNKVAKRDVKVLVVGNPANTNAYIAMKSAPDLDPKNFTAMLRLDHNRALSQLSAKLGKPVAGIEKLAVWGNHSPTMYPDYRFATADGASIGDAINDQEWNASTFIPTVGKRGAAIIEARGLSSAASAANAAIDHIRDWVLGTSGKWVTMGVPSDGSYGIPEGVMFGFPVTTENGKYTIVKDLPIDDFSQKYIDKTLAELEEERSGVAHLLG</sequence>
<evidence type="ECO:0000255" key="1">
    <source>
        <dbReference type="HAMAP-Rule" id="MF_01517"/>
    </source>
</evidence>
<feature type="chain" id="PRO_0000113401" description="Malate dehydrogenase">
    <location>
        <begin position="1"/>
        <end position="328"/>
    </location>
</feature>
<feature type="active site" description="Proton acceptor" evidence="1">
    <location>
        <position position="189"/>
    </location>
</feature>
<feature type="binding site" evidence="1">
    <location>
        <begin position="11"/>
        <end position="17"/>
    </location>
    <ligand>
        <name>NAD(+)</name>
        <dbReference type="ChEBI" id="CHEBI:57540"/>
    </ligand>
</feature>
<feature type="binding site" evidence="1">
    <location>
        <position position="94"/>
    </location>
    <ligand>
        <name>substrate</name>
    </ligand>
</feature>
<feature type="binding site" evidence="1">
    <location>
        <position position="100"/>
    </location>
    <ligand>
        <name>substrate</name>
    </ligand>
</feature>
<feature type="binding site" evidence="1">
    <location>
        <position position="107"/>
    </location>
    <ligand>
        <name>NAD(+)</name>
        <dbReference type="ChEBI" id="CHEBI:57540"/>
    </ligand>
</feature>
<feature type="binding site" evidence="1">
    <location>
        <position position="114"/>
    </location>
    <ligand>
        <name>NAD(+)</name>
        <dbReference type="ChEBI" id="CHEBI:57540"/>
    </ligand>
</feature>
<feature type="binding site" evidence="1">
    <location>
        <begin position="131"/>
        <end position="133"/>
    </location>
    <ligand>
        <name>NAD(+)</name>
        <dbReference type="ChEBI" id="CHEBI:57540"/>
    </ligand>
</feature>
<feature type="binding site" evidence="1">
    <location>
        <position position="133"/>
    </location>
    <ligand>
        <name>substrate</name>
    </ligand>
</feature>
<feature type="binding site" evidence="1">
    <location>
        <position position="164"/>
    </location>
    <ligand>
        <name>substrate</name>
    </ligand>
</feature>
<reference key="1">
    <citation type="journal article" date="2002" name="Nature">
        <title>Comparison of the genomes of two Xanthomonas pathogens with differing host specificities.</title>
        <authorList>
            <person name="da Silva A.C.R."/>
            <person name="Ferro J.A."/>
            <person name="Reinach F.C."/>
            <person name="Farah C.S."/>
            <person name="Furlan L.R."/>
            <person name="Quaggio R.B."/>
            <person name="Monteiro-Vitorello C.B."/>
            <person name="Van Sluys M.A."/>
            <person name="Almeida N.F. Jr."/>
            <person name="Alves L.M.C."/>
            <person name="do Amaral A.M."/>
            <person name="Bertolini M.C."/>
            <person name="Camargo L.E.A."/>
            <person name="Camarotte G."/>
            <person name="Cannavan F."/>
            <person name="Cardozo J."/>
            <person name="Chambergo F."/>
            <person name="Ciapina L.P."/>
            <person name="Cicarelli R.M.B."/>
            <person name="Coutinho L.L."/>
            <person name="Cursino-Santos J.R."/>
            <person name="El-Dorry H."/>
            <person name="Faria J.B."/>
            <person name="Ferreira A.J.S."/>
            <person name="Ferreira R.C.C."/>
            <person name="Ferro M.I.T."/>
            <person name="Formighieri E.F."/>
            <person name="Franco M.C."/>
            <person name="Greggio C.C."/>
            <person name="Gruber A."/>
            <person name="Katsuyama A.M."/>
            <person name="Kishi L.T."/>
            <person name="Leite R.P."/>
            <person name="Lemos E.G.M."/>
            <person name="Lemos M.V.F."/>
            <person name="Locali E.C."/>
            <person name="Machado M.A."/>
            <person name="Madeira A.M.B.N."/>
            <person name="Martinez-Rossi N.M."/>
            <person name="Martins E.C."/>
            <person name="Meidanis J."/>
            <person name="Menck C.F.M."/>
            <person name="Miyaki C.Y."/>
            <person name="Moon D.H."/>
            <person name="Moreira L.M."/>
            <person name="Novo M.T.M."/>
            <person name="Okura V.K."/>
            <person name="Oliveira M.C."/>
            <person name="Oliveira V.R."/>
            <person name="Pereira H.A."/>
            <person name="Rossi A."/>
            <person name="Sena J.A.D."/>
            <person name="Silva C."/>
            <person name="de Souza R.F."/>
            <person name="Spinola L.A.F."/>
            <person name="Takita M.A."/>
            <person name="Tamura R.E."/>
            <person name="Teixeira E.C."/>
            <person name="Tezza R.I.D."/>
            <person name="Trindade dos Santos M."/>
            <person name="Truffi D."/>
            <person name="Tsai S.M."/>
            <person name="White F.F."/>
            <person name="Setubal J.C."/>
            <person name="Kitajima J.P."/>
        </authorList>
    </citation>
    <scope>NUCLEOTIDE SEQUENCE [LARGE SCALE GENOMIC DNA]</scope>
    <source>
        <strain>306</strain>
    </source>
</reference>
<proteinExistence type="inferred from homology"/>
<dbReference type="EC" id="1.1.1.37" evidence="1"/>
<dbReference type="EMBL" id="AE008923">
    <property type="protein sequence ID" value="AAM35889.1"/>
    <property type="molecule type" value="Genomic_DNA"/>
</dbReference>
<dbReference type="RefSeq" id="WP_003486642.1">
    <property type="nucleotide sequence ID" value="NC_003919.1"/>
</dbReference>
<dbReference type="SMR" id="Q8PNP8"/>
<dbReference type="KEGG" id="xac:XAC1006"/>
<dbReference type="eggNOG" id="COG0039">
    <property type="taxonomic scope" value="Bacteria"/>
</dbReference>
<dbReference type="HOGENOM" id="CLU_040727_2_0_6"/>
<dbReference type="Proteomes" id="UP000000576">
    <property type="component" value="Chromosome"/>
</dbReference>
<dbReference type="GO" id="GO:0030060">
    <property type="term" value="F:L-malate dehydrogenase (NAD+) activity"/>
    <property type="evidence" value="ECO:0007669"/>
    <property type="project" value="UniProtKB-UniRule"/>
</dbReference>
<dbReference type="GO" id="GO:0006108">
    <property type="term" value="P:malate metabolic process"/>
    <property type="evidence" value="ECO:0007669"/>
    <property type="project" value="InterPro"/>
</dbReference>
<dbReference type="GO" id="GO:0006099">
    <property type="term" value="P:tricarboxylic acid cycle"/>
    <property type="evidence" value="ECO:0007669"/>
    <property type="project" value="UniProtKB-UniRule"/>
</dbReference>
<dbReference type="CDD" id="cd01338">
    <property type="entry name" value="MDH_chloroplast-like"/>
    <property type="match status" value="1"/>
</dbReference>
<dbReference type="FunFam" id="3.40.50.720:FF:000010">
    <property type="entry name" value="Malate dehydrogenase"/>
    <property type="match status" value="1"/>
</dbReference>
<dbReference type="FunFam" id="3.90.110.10:FF:000002">
    <property type="entry name" value="Malate dehydrogenase"/>
    <property type="match status" value="1"/>
</dbReference>
<dbReference type="Gene3D" id="3.90.110.10">
    <property type="entry name" value="Lactate dehydrogenase/glycoside hydrolase, family 4, C-terminal"/>
    <property type="match status" value="1"/>
</dbReference>
<dbReference type="Gene3D" id="3.40.50.720">
    <property type="entry name" value="NAD(P)-binding Rossmann-like Domain"/>
    <property type="match status" value="1"/>
</dbReference>
<dbReference type="HAMAP" id="MF_01517">
    <property type="entry name" value="Malate_dehydrog_2"/>
    <property type="match status" value="1"/>
</dbReference>
<dbReference type="InterPro" id="IPR001557">
    <property type="entry name" value="L-lactate/malate_DH"/>
</dbReference>
<dbReference type="InterPro" id="IPR022383">
    <property type="entry name" value="Lactate/malate_DH_C"/>
</dbReference>
<dbReference type="InterPro" id="IPR001236">
    <property type="entry name" value="Lactate/malate_DH_N"/>
</dbReference>
<dbReference type="InterPro" id="IPR015955">
    <property type="entry name" value="Lactate_DH/Glyco_Ohase_4_C"/>
</dbReference>
<dbReference type="InterPro" id="IPR010945">
    <property type="entry name" value="Malate_DH_type2"/>
</dbReference>
<dbReference type="InterPro" id="IPR036291">
    <property type="entry name" value="NAD(P)-bd_dom_sf"/>
</dbReference>
<dbReference type="NCBIfam" id="TIGR01759">
    <property type="entry name" value="MalateDH-SF1"/>
    <property type="match status" value="1"/>
</dbReference>
<dbReference type="NCBIfam" id="NF003916">
    <property type="entry name" value="PRK05442.1"/>
    <property type="match status" value="1"/>
</dbReference>
<dbReference type="PANTHER" id="PTHR23382">
    <property type="entry name" value="MALATE DEHYDROGENASE"/>
    <property type="match status" value="1"/>
</dbReference>
<dbReference type="Pfam" id="PF02866">
    <property type="entry name" value="Ldh_1_C"/>
    <property type="match status" value="1"/>
</dbReference>
<dbReference type="Pfam" id="PF00056">
    <property type="entry name" value="Ldh_1_N"/>
    <property type="match status" value="1"/>
</dbReference>
<dbReference type="PIRSF" id="PIRSF000102">
    <property type="entry name" value="Lac_mal_DH"/>
    <property type="match status" value="1"/>
</dbReference>
<dbReference type="SUPFAM" id="SSF56327">
    <property type="entry name" value="LDH C-terminal domain-like"/>
    <property type="match status" value="1"/>
</dbReference>
<dbReference type="SUPFAM" id="SSF51735">
    <property type="entry name" value="NAD(P)-binding Rossmann-fold domains"/>
    <property type="match status" value="1"/>
</dbReference>